<keyword id="KW-0963">Cytoplasm</keyword>
<keyword id="KW-0489">Methyltransferase</keyword>
<keyword id="KW-1185">Reference proteome</keyword>
<keyword id="KW-0949">S-adenosyl-L-methionine</keyword>
<keyword id="KW-0808">Transferase</keyword>
<organism>
    <name type="scientific">Streptococcus pneumoniae serotype 4 (strain ATCC BAA-334 / TIGR4)</name>
    <dbReference type="NCBI Taxonomy" id="170187"/>
    <lineage>
        <taxon>Bacteria</taxon>
        <taxon>Bacillati</taxon>
        <taxon>Bacillota</taxon>
        <taxon>Bacilli</taxon>
        <taxon>Lactobacillales</taxon>
        <taxon>Streptococcaceae</taxon>
        <taxon>Streptococcus</taxon>
    </lineage>
</organism>
<name>PRMA_STRPN</name>
<dbReference type="EC" id="2.1.1.-" evidence="1"/>
<dbReference type="EMBL" id="AE005672">
    <property type="protein sequence ID" value="AAK75855.1"/>
    <property type="molecule type" value="Genomic_DNA"/>
</dbReference>
<dbReference type="PIR" id="F95207">
    <property type="entry name" value="F95207"/>
</dbReference>
<dbReference type="RefSeq" id="WP_000451153.1">
    <property type="nucleotide sequence ID" value="NC_003028.3"/>
</dbReference>
<dbReference type="SMR" id="Q97P62"/>
<dbReference type="PaxDb" id="170187-SP_1782"/>
<dbReference type="EnsemblBacteria" id="AAK75855">
    <property type="protein sequence ID" value="AAK75855"/>
    <property type="gene ID" value="SP_1782"/>
</dbReference>
<dbReference type="KEGG" id="spn:SP_1782"/>
<dbReference type="eggNOG" id="COG2264">
    <property type="taxonomic scope" value="Bacteria"/>
</dbReference>
<dbReference type="PhylomeDB" id="Q97P62"/>
<dbReference type="BioCyc" id="SPNE170187:G1FZB-1811-MONOMER"/>
<dbReference type="Proteomes" id="UP000000585">
    <property type="component" value="Chromosome"/>
</dbReference>
<dbReference type="GO" id="GO:0005737">
    <property type="term" value="C:cytoplasm"/>
    <property type="evidence" value="ECO:0007669"/>
    <property type="project" value="UniProtKB-SubCell"/>
</dbReference>
<dbReference type="GO" id="GO:0016279">
    <property type="term" value="F:protein-lysine N-methyltransferase activity"/>
    <property type="evidence" value="ECO:0007669"/>
    <property type="project" value="RHEA"/>
</dbReference>
<dbReference type="GO" id="GO:0032259">
    <property type="term" value="P:methylation"/>
    <property type="evidence" value="ECO:0007669"/>
    <property type="project" value="UniProtKB-KW"/>
</dbReference>
<dbReference type="CDD" id="cd02440">
    <property type="entry name" value="AdoMet_MTases"/>
    <property type="match status" value="1"/>
</dbReference>
<dbReference type="Gene3D" id="3.40.50.150">
    <property type="entry name" value="Vaccinia Virus protein VP39"/>
    <property type="match status" value="1"/>
</dbReference>
<dbReference type="HAMAP" id="MF_00735">
    <property type="entry name" value="Methyltr_PrmA"/>
    <property type="match status" value="1"/>
</dbReference>
<dbReference type="InterPro" id="IPR050078">
    <property type="entry name" value="Ribosomal_L11_MeTrfase_PrmA"/>
</dbReference>
<dbReference type="InterPro" id="IPR004498">
    <property type="entry name" value="Ribosomal_PrmA_MeTrfase"/>
</dbReference>
<dbReference type="InterPro" id="IPR029063">
    <property type="entry name" value="SAM-dependent_MTases_sf"/>
</dbReference>
<dbReference type="NCBIfam" id="TIGR00406">
    <property type="entry name" value="prmA"/>
    <property type="match status" value="1"/>
</dbReference>
<dbReference type="PANTHER" id="PTHR43648">
    <property type="entry name" value="ELECTRON TRANSFER FLAVOPROTEIN BETA SUBUNIT LYSINE METHYLTRANSFERASE"/>
    <property type="match status" value="1"/>
</dbReference>
<dbReference type="PANTHER" id="PTHR43648:SF1">
    <property type="entry name" value="ELECTRON TRANSFER FLAVOPROTEIN BETA SUBUNIT LYSINE METHYLTRANSFERASE"/>
    <property type="match status" value="1"/>
</dbReference>
<dbReference type="Pfam" id="PF06325">
    <property type="entry name" value="PrmA"/>
    <property type="match status" value="1"/>
</dbReference>
<dbReference type="PIRSF" id="PIRSF000401">
    <property type="entry name" value="RPL11_MTase"/>
    <property type="match status" value="1"/>
</dbReference>
<dbReference type="SUPFAM" id="SSF53335">
    <property type="entry name" value="S-adenosyl-L-methionine-dependent methyltransferases"/>
    <property type="match status" value="1"/>
</dbReference>
<evidence type="ECO:0000255" key="1">
    <source>
        <dbReference type="HAMAP-Rule" id="MF_00735"/>
    </source>
</evidence>
<accession>Q97P62</accession>
<sequence>METWQELKVTVKREGEELVSNLLIELGAQGVAIEDSMDYVGNVDRFGEIFPEVEQQEEIVVTAYYPDTVDVTVVEADLQARLAELTDFMDLGELKIGTTALAEEDWADNWKKYYEPARITHDLTIVPSWTDYEATAGEMIIKLDPGMAFGTGTHPTTKMSLFALEQVLRGGETVLDVGTGSGVLSIASSLLGAKEIFAYDLDDVAVRVAQENIELNPGMENIHVAAGDLLKGVEIEADVIVANILADILIHLIDDAYRLVKDEGYLIMSGIIKDKLDMVRQSAESAGFFLETHMVQGEWNTCVFKKTKDISGVIGG</sequence>
<gene>
    <name evidence="1" type="primary">prmA</name>
    <name type="ordered locus">SP_1782</name>
</gene>
<comment type="function">
    <text evidence="1">Methylates ribosomal protein L11.</text>
</comment>
<comment type="catalytic activity">
    <reaction evidence="1">
        <text>L-lysyl-[protein] + 3 S-adenosyl-L-methionine = N(6),N(6),N(6)-trimethyl-L-lysyl-[protein] + 3 S-adenosyl-L-homocysteine + 3 H(+)</text>
        <dbReference type="Rhea" id="RHEA:54192"/>
        <dbReference type="Rhea" id="RHEA-COMP:9752"/>
        <dbReference type="Rhea" id="RHEA-COMP:13826"/>
        <dbReference type="ChEBI" id="CHEBI:15378"/>
        <dbReference type="ChEBI" id="CHEBI:29969"/>
        <dbReference type="ChEBI" id="CHEBI:57856"/>
        <dbReference type="ChEBI" id="CHEBI:59789"/>
        <dbReference type="ChEBI" id="CHEBI:61961"/>
    </reaction>
</comment>
<comment type="subcellular location">
    <subcellularLocation>
        <location evidence="1">Cytoplasm</location>
    </subcellularLocation>
</comment>
<comment type="similarity">
    <text evidence="1">Belongs to the methyltransferase superfamily. PrmA family.</text>
</comment>
<feature type="chain" id="PRO_0000192316" description="Ribosomal protein L11 methyltransferase">
    <location>
        <begin position="1"/>
        <end position="316"/>
    </location>
</feature>
<feature type="binding site" evidence="1">
    <location>
        <position position="157"/>
    </location>
    <ligand>
        <name>S-adenosyl-L-methionine</name>
        <dbReference type="ChEBI" id="CHEBI:59789"/>
    </ligand>
</feature>
<feature type="binding site" evidence="1">
    <location>
        <position position="178"/>
    </location>
    <ligand>
        <name>S-adenosyl-L-methionine</name>
        <dbReference type="ChEBI" id="CHEBI:59789"/>
    </ligand>
</feature>
<feature type="binding site" evidence="1">
    <location>
        <position position="200"/>
    </location>
    <ligand>
        <name>S-adenosyl-L-methionine</name>
        <dbReference type="ChEBI" id="CHEBI:59789"/>
    </ligand>
</feature>
<feature type="binding site" evidence="1">
    <location>
        <position position="243"/>
    </location>
    <ligand>
        <name>S-adenosyl-L-methionine</name>
        <dbReference type="ChEBI" id="CHEBI:59789"/>
    </ligand>
</feature>
<protein>
    <recommendedName>
        <fullName evidence="1">Ribosomal protein L11 methyltransferase</fullName>
        <shortName evidence="1">L11 Mtase</shortName>
        <ecNumber evidence="1">2.1.1.-</ecNumber>
    </recommendedName>
</protein>
<reference key="1">
    <citation type="journal article" date="2001" name="Science">
        <title>Complete genome sequence of a virulent isolate of Streptococcus pneumoniae.</title>
        <authorList>
            <person name="Tettelin H."/>
            <person name="Nelson K.E."/>
            <person name="Paulsen I.T."/>
            <person name="Eisen J.A."/>
            <person name="Read T.D."/>
            <person name="Peterson S.N."/>
            <person name="Heidelberg J.F."/>
            <person name="DeBoy R.T."/>
            <person name="Haft D.H."/>
            <person name="Dodson R.J."/>
            <person name="Durkin A.S."/>
            <person name="Gwinn M.L."/>
            <person name="Kolonay J.F."/>
            <person name="Nelson W.C."/>
            <person name="Peterson J.D."/>
            <person name="Umayam L.A."/>
            <person name="White O."/>
            <person name="Salzberg S.L."/>
            <person name="Lewis M.R."/>
            <person name="Radune D."/>
            <person name="Holtzapple E.K."/>
            <person name="Khouri H.M."/>
            <person name="Wolf A.M."/>
            <person name="Utterback T.R."/>
            <person name="Hansen C.L."/>
            <person name="McDonald L.A."/>
            <person name="Feldblyum T.V."/>
            <person name="Angiuoli S.V."/>
            <person name="Dickinson T."/>
            <person name="Hickey E.K."/>
            <person name="Holt I.E."/>
            <person name="Loftus B.J."/>
            <person name="Yang F."/>
            <person name="Smith H.O."/>
            <person name="Venter J.C."/>
            <person name="Dougherty B.A."/>
            <person name="Morrison D.A."/>
            <person name="Hollingshead S.K."/>
            <person name="Fraser C.M."/>
        </authorList>
    </citation>
    <scope>NUCLEOTIDE SEQUENCE [LARGE SCALE GENOMIC DNA]</scope>
    <source>
        <strain>ATCC BAA-334 / TIGR4</strain>
    </source>
</reference>
<proteinExistence type="inferred from homology"/>